<feature type="chain" id="PRO_0000225216" description="Elongation factor G">
    <location>
        <begin position="1"/>
        <end position="695"/>
    </location>
</feature>
<feature type="domain" description="tr-type G">
    <location>
        <begin position="10"/>
        <end position="285"/>
    </location>
</feature>
<feature type="binding site" evidence="1">
    <location>
        <begin position="19"/>
        <end position="26"/>
    </location>
    <ligand>
        <name>GTP</name>
        <dbReference type="ChEBI" id="CHEBI:37565"/>
    </ligand>
</feature>
<feature type="binding site" evidence="1">
    <location>
        <begin position="83"/>
        <end position="87"/>
    </location>
    <ligand>
        <name>GTP</name>
        <dbReference type="ChEBI" id="CHEBI:37565"/>
    </ligand>
</feature>
<feature type="binding site" evidence="1">
    <location>
        <begin position="137"/>
        <end position="140"/>
    </location>
    <ligand>
        <name>GTP</name>
        <dbReference type="ChEBI" id="CHEBI:37565"/>
    </ligand>
</feature>
<accession>Q38UQ9</accession>
<gene>
    <name evidence="1" type="primary">fusA</name>
    <name type="ordered locus">LCA_1768</name>
</gene>
<comment type="function">
    <text evidence="1">Catalyzes the GTP-dependent ribosomal translocation step during translation elongation. During this step, the ribosome changes from the pre-translocational (PRE) to the post-translocational (POST) state as the newly formed A-site-bound peptidyl-tRNA and P-site-bound deacylated tRNA move to the P and E sites, respectively. Catalyzes the coordinated movement of the two tRNA molecules, the mRNA and conformational changes in the ribosome.</text>
</comment>
<comment type="subcellular location">
    <subcellularLocation>
        <location evidence="1">Cytoplasm</location>
    </subcellularLocation>
</comment>
<comment type="similarity">
    <text evidence="1">Belongs to the TRAFAC class translation factor GTPase superfamily. Classic translation factor GTPase family. EF-G/EF-2 subfamily.</text>
</comment>
<organism>
    <name type="scientific">Latilactobacillus sakei subsp. sakei (strain 23K)</name>
    <name type="common">Lactobacillus sakei subsp. sakei</name>
    <dbReference type="NCBI Taxonomy" id="314315"/>
    <lineage>
        <taxon>Bacteria</taxon>
        <taxon>Bacillati</taxon>
        <taxon>Bacillota</taxon>
        <taxon>Bacilli</taxon>
        <taxon>Lactobacillales</taxon>
        <taxon>Lactobacillaceae</taxon>
        <taxon>Latilactobacillus</taxon>
    </lineage>
</organism>
<sequence length="695" mass="76924">MANKREFPLDKTRNIGIMAHIDAGKTTTTERILYYTGKIHKIGETHEGASQMDWMEQEQERGITITSAATTAEWKGNRVNIIDTPGHVDFTIEVERSLRVLDGAITVLDAQSGVEPQTENVWRQATTYGVPRIVFVNKMDKLGANFDYSMTTLEDRLQANAHAVQMPIGAEDEFQGVIDLIEMQADIYDEDELGAKWDTVDVPADYLEEATKRRAELVEAVADVNDDIMDKYLEGEEISKEELKAAIRQATIDLKFFPVFAGSAFKNKGVQMLMDGVVDYLPSPLDVRPYNAKNPEDDSEVELMAGDDKPFAGLAFKIATDPFVGRLTFFRVYTGTLQSGSYILNATKDKRERVGRLLQMHSNHRNEIPEVFSGDIAAAIGLKNTTTGDSLTDVDHPLILESMEFPDPVIQVSVEPESKEDRDKLDLALQKLAEEDPTFKAETNNETGETLISGMGELHLDIMVDRMRREFKVVAKIGEPQVAYRETFTKQASAQGKFVRQSGGKGQYGDVWVEFTPNEEGKGFEFEDAIVGGVVPREYIPSVEQGLKESMANGVLAGYPLIDVKAKLYDGSYHDVDSNESAFKIAASMALKNAAKQAGAEILEPIMKVEVIAPEEYLGDIMGQVTARRGAVEGMEARGNAQIVNAMVPLSEMFGYATTLRSATQGRGTFTMVFDHYSAVPKSIQEEIIKKNGGQ</sequence>
<reference key="1">
    <citation type="journal article" date="2005" name="Nat. Biotechnol.">
        <title>The complete genome sequence of the meat-borne lactic acid bacterium Lactobacillus sakei 23K.</title>
        <authorList>
            <person name="Chaillou S."/>
            <person name="Champomier-Verges M.-C."/>
            <person name="Cornet M."/>
            <person name="Crutz-Le Coq A.-M."/>
            <person name="Dudez A.-M."/>
            <person name="Martin V."/>
            <person name="Beaufils S."/>
            <person name="Darbon-Rongere E."/>
            <person name="Bossy R."/>
            <person name="Loux V."/>
            <person name="Zagorec M."/>
        </authorList>
    </citation>
    <scope>NUCLEOTIDE SEQUENCE [LARGE SCALE GENOMIC DNA]</scope>
    <source>
        <strain>23K</strain>
    </source>
</reference>
<keyword id="KW-0963">Cytoplasm</keyword>
<keyword id="KW-0251">Elongation factor</keyword>
<keyword id="KW-0342">GTP-binding</keyword>
<keyword id="KW-0547">Nucleotide-binding</keyword>
<keyword id="KW-0648">Protein biosynthesis</keyword>
<keyword id="KW-1185">Reference proteome</keyword>
<name>EFG_LATSS</name>
<proteinExistence type="inferred from homology"/>
<evidence type="ECO:0000255" key="1">
    <source>
        <dbReference type="HAMAP-Rule" id="MF_00054"/>
    </source>
</evidence>
<dbReference type="EMBL" id="CR936503">
    <property type="protein sequence ID" value="CAI56076.1"/>
    <property type="molecule type" value="Genomic_DNA"/>
</dbReference>
<dbReference type="RefSeq" id="WP_011375452.1">
    <property type="nucleotide sequence ID" value="NC_007576.1"/>
</dbReference>
<dbReference type="SMR" id="Q38UQ9"/>
<dbReference type="STRING" id="314315.LCA_1768"/>
<dbReference type="KEGG" id="lsa:LCA_1768"/>
<dbReference type="eggNOG" id="COG0480">
    <property type="taxonomic scope" value="Bacteria"/>
</dbReference>
<dbReference type="HOGENOM" id="CLU_002794_4_1_9"/>
<dbReference type="OrthoDB" id="9804431at2"/>
<dbReference type="Proteomes" id="UP000002707">
    <property type="component" value="Chromosome"/>
</dbReference>
<dbReference type="GO" id="GO:0005737">
    <property type="term" value="C:cytoplasm"/>
    <property type="evidence" value="ECO:0007669"/>
    <property type="project" value="UniProtKB-SubCell"/>
</dbReference>
<dbReference type="GO" id="GO:0005525">
    <property type="term" value="F:GTP binding"/>
    <property type="evidence" value="ECO:0007669"/>
    <property type="project" value="UniProtKB-UniRule"/>
</dbReference>
<dbReference type="GO" id="GO:0003924">
    <property type="term" value="F:GTPase activity"/>
    <property type="evidence" value="ECO:0007669"/>
    <property type="project" value="InterPro"/>
</dbReference>
<dbReference type="GO" id="GO:0003746">
    <property type="term" value="F:translation elongation factor activity"/>
    <property type="evidence" value="ECO:0007669"/>
    <property type="project" value="UniProtKB-UniRule"/>
</dbReference>
<dbReference type="GO" id="GO:0032790">
    <property type="term" value="P:ribosome disassembly"/>
    <property type="evidence" value="ECO:0007669"/>
    <property type="project" value="TreeGrafter"/>
</dbReference>
<dbReference type="CDD" id="cd01886">
    <property type="entry name" value="EF-G"/>
    <property type="match status" value="1"/>
</dbReference>
<dbReference type="CDD" id="cd16262">
    <property type="entry name" value="EFG_III"/>
    <property type="match status" value="1"/>
</dbReference>
<dbReference type="CDD" id="cd01434">
    <property type="entry name" value="EFG_mtEFG1_IV"/>
    <property type="match status" value="1"/>
</dbReference>
<dbReference type="CDD" id="cd03713">
    <property type="entry name" value="EFG_mtEFG_C"/>
    <property type="match status" value="1"/>
</dbReference>
<dbReference type="CDD" id="cd04088">
    <property type="entry name" value="EFG_mtEFG_II"/>
    <property type="match status" value="1"/>
</dbReference>
<dbReference type="FunFam" id="2.40.30.10:FF:000006">
    <property type="entry name" value="Elongation factor G"/>
    <property type="match status" value="1"/>
</dbReference>
<dbReference type="FunFam" id="3.30.230.10:FF:000003">
    <property type="entry name" value="Elongation factor G"/>
    <property type="match status" value="1"/>
</dbReference>
<dbReference type="FunFam" id="3.30.70.240:FF:000001">
    <property type="entry name" value="Elongation factor G"/>
    <property type="match status" value="1"/>
</dbReference>
<dbReference type="FunFam" id="3.30.70.870:FF:000001">
    <property type="entry name" value="Elongation factor G"/>
    <property type="match status" value="1"/>
</dbReference>
<dbReference type="FunFam" id="3.40.50.300:FF:000029">
    <property type="entry name" value="Elongation factor G"/>
    <property type="match status" value="1"/>
</dbReference>
<dbReference type="Gene3D" id="3.30.230.10">
    <property type="match status" value="1"/>
</dbReference>
<dbReference type="Gene3D" id="3.30.70.240">
    <property type="match status" value="1"/>
</dbReference>
<dbReference type="Gene3D" id="3.30.70.870">
    <property type="entry name" value="Elongation Factor G (Translational Gtpase), domain 3"/>
    <property type="match status" value="1"/>
</dbReference>
<dbReference type="Gene3D" id="3.40.50.300">
    <property type="entry name" value="P-loop containing nucleotide triphosphate hydrolases"/>
    <property type="match status" value="1"/>
</dbReference>
<dbReference type="Gene3D" id="2.40.30.10">
    <property type="entry name" value="Translation factors"/>
    <property type="match status" value="1"/>
</dbReference>
<dbReference type="HAMAP" id="MF_00054_B">
    <property type="entry name" value="EF_G_EF_2_B"/>
    <property type="match status" value="1"/>
</dbReference>
<dbReference type="InterPro" id="IPR053905">
    <property type="entry name" value="EF-G-like_DII"/>
</dbReference>
<dbReference type="InterPro" id="IPR041095">
    <property type="entry name" value="EFG_II"/>
</dbReference>
<dbReference type="InterPro" id="IPR009022">
    <property type="entry name" value="EFG_III"/>
</dbReference>
<dbReference type="InterPro" id="IPR035647">
    <property type="entry name" value="EFG_III/V"/>
</dbReference>
<dbReference type="InterPro" id="IPR047872">
    <property type="entry name" value="EFG_IV"/>
</dbReference>
<dbReference type="InterPro" id="IPR035649">
    <property type="entry name" value="EFG_V"/>
</dbReference>
<dbReference type="InterPro" id="IPR000640">
    <property type="entry name" value="EFG_V-like"/>
</dbReference>
<dbReference type="InterPro" id="IPR031157">
    <property type="entry name" value="G_TR_CS"/>
</dbReference>
<dbReference type="InterPro" id="IPR027417">
    <property type="entry name" value="P-loop_NTPase"/>
</dbReference>
<dbReference type="InterPro" id="IPR020568">
    <property type="entry name" value="Ribosomal_Su5_D2-typ_SF"/>
</dbReference>
<dbReference type="InterPro" id="IPR014721">
    <property type="entry name" value="Ribsml_uS5_D2-typ_fold_subgr"/>
</dbReference>
<dbReference type="InterPro" id="IPR005225">
    <property type="entry name" value="Small_GTP-bd"/>
</dbReference>
<dbReference type="InterPro" id="IPR000795">
    <property type="entry name" value="T_Tr_GTP-bd_dom"/>
</dbReference>
<dbReference type="InterPro" id="IPR009000">
    <property type="entry name" value="Transl_B-barrel_sf"/>
</dbReference>
<dbReference type="InterPro" id="IPR004540">
    <property type="entry name" value="Transl_elong_EFG/EF2"/>
</dbReference>
<dbReference type="InterPro" id="IPR005517">
    <property type="entry name" value="Transl_elong_EFG/EF2_IV"/>
</dbReference>
<dbReference type="NCBIfam" id="TIGR00484">
    <property type="entry name" value="EF-G"/>
    <property type="match status" value="1"/>
</dbReference>
<dbReference type="NCBIfam" id="NF009379">
    <property type="entry name" value="PRK12740.1-3"/>
    <property type="match status" value="1"/>
</dbReference>
<dbReference type="NCBIfam" id="NF009381">
    <property type="entry name" value="PRK12740.1-5"/>
    <property type="match status" value="1"/>
</dbReference>
<dbReference type="NCBIfam" id="TIGR00231">
    <property type="entry name" value="small_GTP"/>
    <property type="match status" value="1"/>
</dbReference>
<dbReference type="PANTHER" id="PTHR43261:SF1">
    <property type="entry name" value="RIBOSOME-RELEASING FACTOR 2, MITOCHONDRIAL"/>
    <property type="match status" value="1"/>
</dbReference>
<dbReference type="PANTHER" id="PTHR43261">
    <property type="entry name" value="TRANSLATION ELONGATION FACTOR G-RELATED"/>
    <property type="match status" value="1"/>
</dbReference>
<dbReference type="Pfam" id="PF22042">
    <property type="entry name" value="EF-G_D2"/>
    <property type="match status" value="1"/>
</dbReference>
<dbReference type="Pfam" id="PF00679">
    <property type="entry name" value="EFG_C"/>
    <property type="match status" value="1"/>
</dbReference>
<dbReference type="Pfam" id="PF14492">
    <property type="entry name" value="EFG_III"/>
    <property type="match status" value="1"/>
</dbReference>
<dbReference type="Pfam" id="PF03764">
    <property type="entry name" value="EFG_IV"/>
    <property type="match status" value="1"/>
</dbReference>
<dbReference type="Pfam" id="PF00009">
    <property type="entry name" value="GTP_EFTU"/>
    <property type="match status" value="1"/>
</dbReference>
<dbReference type="PRINTS" id="PR00315">
    <property type="entry name" value="ELONGATNFCT"/>
</dbReference>
<dbReference type="SMART" id="SM00838">
    <property type="entry name" value="EFG_C"/>
    <property type="match status" value="1"/>
</dbReference>
<dbReference type="SMART" id="SM00889">
    <property type="entry name" value="EFG_IV"/>
    <property type="match status" value="1"/>
</dbReference>
<dbReference type="SUPFAM" id="SSF54980">
    <property type="entry name" value="EF-G C-terminal domain-like"/>
    <property type="match status" value="2"/>
</dbReference>
<dbReference type="SUPFAM" id="SSF52540">
    <property type="entry name" value="P-loop containing nucleoside triphosphate hydrolases"/>
    <property type="match status" value="1"/>
</dbReference>
<dbReference type="SUPFAM" id="SSF54211">
    <property type="entry name" value="Ribosomal protein S5 domain 2-like"/>
    <property type="match status" value="1"/>
</dbReference>
<dbReference type="SUPFAM" id="SSF50447">
    <property type="entry name" value="Translation proteins"/>
    <property type="match status" value="1"/>
</dbReference>
<dbReference type="PROSITE" id="PS00301">
    <property type="entry name" value="G_TR_1"/>
    <property type="match status" value="1"/>
</dbReference>
<dbReference type="PROSITE" id="PS51722">
    <property type="entry name" value="G_TR_2"/>
    <property type="match status" value="1"/>
</dbReference>
<protein>
    <recommendedName>
        <fullName evidence="1">Elongation factor G</fullName>
        <shortName evidence="1">EF-G</shortName>
    </recommendedName>
</protein>